<protein>
    <recommendedName>
        <fullName evidence="1">Large ribosomal subunit protein uL14</fullName>
    </recommendedName>
    <alternativeName>
        <fullName evidence="2">50S ribosomal protein L14</fullName>
    </alternativeName>
</protein>
<name>RL14_SHISS</name>
<comment type="function">
    <text evidence="1">Binds to 23S rRNA. Forms part of two intersubunit bridges in the 70S ribosome.</text>
</comment>
<comment type="subunit">
    <text evidence="1">Part of the 50S ribosomal subunit. Forms a cluster with proteins L3 and L19. In the 70S ribosome, L14 and L19 interact and together make contacts with the 16S rRNA in bridges B5 and B8.</text>
</comment>
<comment type="similarity">
    <text evidence="1">Belongs to the universal ribosomal protein uL14 family.</text>
</comment>
<organism>
    <name type="scientific">Shigella sonnei (strain Ss046)</name>
    <dbReference type="NCBI Taxonomy" id="300269"/>
    <lineage>
        <taxon>Bacteria</taxon>
        <taxon>Pseudomonadati</taxon>
        <taxon>Pseudomonadota</taxon>
        <taxon>Gammaproteobacteria</taxon>
        <taxon>Enterobacterales</taxon>
        <taxon>Enterobacteriaceae</taxon>
        <taxon>Shigella</taxon>
    </lineage>
</organism>
<feature type="chain" id="PRO_0000266562" description="Large ribosomal subunit protein uL14">
    <location>
        <begin position="1"/>
        <end position="123"/>
    </location>
</feature>
<accession>Q3YWU9</accession>
<gene>
    <name evidence="1" type="primary">rplN</name>
    <name type="ordered locus">SSON_3451</name>
</gene>
<keyword id="KW-1185">Reference proteome</keyword>
<keyword id="KW-0687">Ribonucleoprotein</keyword>
<keyword id="KW-0689">Ribosomal protein</keyword>
<keyword id="KW-0694">RNA-binding</keyword>
<keyword id="KW-0699">rRNA-binding</keyword>
<sequence>MIQEQTMLNVADNSGARRVMCIKVLGGSHRRYAGVGDIIKITIKEAIPRGKVKKGDVLKAVVVRTKKGVRRPDGSVIRFDGNACVLLNNNSEQPIGTRIFGPVTRELRSEKFMKIISLAPEVL</sequence>
<reference key="1">
    <citation type="journal article" date="2005" name="Nucleic Acids Res.">
        <title>Genome dynamics and diversity of Shigella species, the etiologic agents of bacillary dysentery.</title>
        <authorList>
            <person name="Yang F."/>
            <person name="Yang J."/>
            <person name="Zhang X."/>
            <person name="Chen L."/>
            <person name="Jiang Y."/>
            <person name="Yan Y."/>
            <person name="Tang X."/>
            <person name="Wang J."/>
            <person name="Xiong Z."/>
            <person name="Dong J."/>
            <person name="Xue Y."/>
            <person name="Zhu Y."/>
            <person name="Xu X."/>
            <person name="Sun L."/>
            <person name="Chen S."/>
            <person name="Nie H."/>
            <person name="Peng J."/>
            <person name="Xu J."/>
            <person name="Wang Y."/>
            <person name="Yuan Z."/>
            <person name="Wen Y."/>
            <person name="Yao Z."/>
            <person name="Shen Y."/>
            <person name="Qiang B."/>
            <person name="Hou Y."/>
            <person name="Yu J."/>
            <person name="Jin Q."/>
        </authorList>
    </citation>
    <scope>NUCLEOTIDE SEQUENCE [LARGE SCALE GENOMIC DNA]</scope>
    <source>
        <strain>Ss046</strain>
    </source>
</reference>
<evidence type="ECO:0000255" key="1">
    <source>
        <dbReference type="HAMAP-Rule" id="MF_01367"/>
    </source>
</evidence>
<evidence type="ECO:0000305" key="2"/>
<proteinExistence type="inferred from homology"/>
<dbReference type="EMBL" id="CP000038">
    <property type="protein sequence ID" value="AAZ90013.1"/>
    <property type="molecule type" value="Genomic_DNA"/>
</dbReference>
<dbReference type="RefSeq" id="WP_000613955.1">
    <property type="nucleotide sequence ID" value="NC_007384.1"/>
</dbReference>
<dbReference type="SMR" id="Q3YWU9"/>
<dbReference type="GeneID" id="93778677"/>
<dbReference type="KEGG" id="ssn:SSON_3451"/>
<dbReference type="HOGENOM" id="CLU_095071_2_1_6"/>
<dbReference type="Proteomes" id="UP000002529">
    <property type="component" value="Chromosome"/>
</dbReference>
<dbReference type="GO" id="GO:0022625">
    <property type="term" value="C:cytosolic large ribosomal subunit"/>
    <property type="evidence" value="ECO:0007669"/>
    <property type="project" value="TreeGrafter"/>
</dbReference>
<dbReference type="GO" id="GO:0070180">
    <property type="term" value="F:large ribosomal subunit rRNA binding"/>
    <property type="evidence" value="ECO:0007669"/>
    <property type="project" value="TreeGrafter"/>
</dbReference>
<dbReference type="GO" id="GO:0003735">
    <property type="term" value="F:structural constituent of ribosome"/>
    <property type="evidence" value="ECO:0007669"/>
    <property type="project" value="InterPro"/>
</dbReference>
<dbReference type="GO" id="GO:0006412">
    <property type="term" value="P:translation"/>
    <property type="evidence" value="ECO:0007669"/>
    <property type="project" value="UniProtKB-UniRule"/>
</dbReference>
<dbReference type="CDD" id="cd00337">
    <property type="entry name" value="Ribosomal_uL14"/>
    <property type="match status" value="1"/>
</dbReference>
<dbReference type="FunFam" id="2.40.150.20:FF:000001">
    <property type="entry name" value="50S ribosomal protein L14"/>
    <property type="match status" value="1"/>
</dbReference>
<dbReference type="Gene3D" id="2.40.150.20">
    <property type="entry name" value="Ribosomal protein L14"/>
    <property type="match status" value="1"/>
</dbReference>
<dbReference type="HAMAP" id="MF_01367">
    <property type="entry name" value="Ribosomal_uL14"/>
    <property type="match status" value="1"/>
</dbReference>
<dbReference type="InterPro" id="IPR000218">
    <property type="entry name" value="Ribosomal_uL14"/>
</dbReference>
<dbReference type="InterPro" id="IPR005745">
    <property type="entry name" value="Ribosomal_uL14_bac-type"/>
</dbReference>
<dbReference type="InterPro" id="IPR019972">
    <property type="entry name" value="Ribosomal_uL14_CS"/>
</dbReference>
<dbReference type="InterPro" id="IPR036853">
    <property type="entry name" value="Ribosomal_uL14_sf"/>
</dbReference>
<dbReference type="NCBIfam" id="TIGR01067">
    <property type="entry name" value="rplN_bact"/>
    <property type="match status" value="1"/>
</dbReference>
<dbReference type="PANTHER" id="PTHR11761">
    <property type="entry name" value="50S/60S RIBOSOMAL PROTEIN L14/L23"/>
    <property type="match status" value="1"/>
</dbReference>
<dbReference type="PANTHER" id="PTHR11761:SF3">
    <property type="entry name" value="LARGE RIBOSOMAL SUBUNIT PROTEIN UL14M"/>
    <property type="match status" value="1"/>
</dbReference>
<dbReference type="Pfam" id="PF00238">
    <property type="entry name" value="Ribosomal_L14"/>
    <property type="match status" value="1"/>
</dbReference>
<dbReference type="SMART" id="SM01374">
    <property type="entry name" value="Ribosomal_L14"/>
    <property type="match status" value="1"/>
</dbReference>
<dbReference type="SUPFAM" id="SSF50193">
    <property type="entry name" value="Ribosomal protein L14"/>
    <property type="match status" value="1"/>
</dbReference>
<dbReference type="PROSITE" id="PS00049">
    <property type="entry name" value="RIBOSOMAL_L14"/>
    <property type="match status" value="1"/>
</dbReference>